<name>RUVC_EHRCJ</name>
<gene>
    <name evidence="1" type="primary">ruvC</name>
    <name type="ordered locus">Ecaj_0008</name>
</gene>
<feature type="chain" id="PRO_0000225141" description="Crossover junction endodeoxyribonuclease RuvC">
    <location>
        <begin position="1"/>
        <end position="156"/>
    </location>
</feature>
<feature type="active site" evidence="1">
    <location>
        <position position="7"/>
    </location>
</feature>
<feature type="active site" evidence="1">
    <location>
        <position position="66"/>
    </location>
</feature>
<feature type="active site" evidence="1">
    <location>
        <position position="138"/>
    </location>
</feature>
<feature type="binding site" evidence="1">
    <location>
        <position position="7"/>
    </location>
    <ligand>
        <name>Mg(2+)</name>
        <dbReference type="ChEBI" id="CHEBI:18420"/>
        <label>1</label>
    </ligand>
</feature>
<feature type="binding site" evidence="1">
    <location>
        <position position="66"/>
    </location>
    <ligand>
        <name>Mg(2+)</name>
        <dbReference type="ChEBI" id="CHEBI:18420"/>
        <label>2</label>
    </ligand>
</feature>
<feature type="binding site" evidence="1">
    <location>
        <position position="138"/>
    </location>
    <ligand>
        <name>Mg(2+)</name>
        <dbReference type="ChEBI" id="CHEBI:18420"/>
        <label>1</label>
    </ligand>
</feature>
<keyword id="KW-0963">Cytoplasm</keyword>
<keyword id="KW-0227">DNA damage</keyword>
<keyword id="KW-0233">DNA recombination</keyword>
<keyword id="KW-0234">DNA repair</keyword>
<keyword id="KW-0238">DNA-binding</keyword>
<keyword id="KW-0255">Endonuclease</keyword>
<keyword id="KW-0378">Hydrolase</keyword>
<keyword id="KW-0460">Magnesium</keyword>
<keyword id="KW-0479">Metal-binding</keyword>
<keyword id="KW-0540">Nuclease</keyword>
<protein>
    <recommendedName>
        <fullName evidence="1">Crossover junction endodeoxyribonuclease RuvC</fullName>
        <ecNumber evidence="1">3.1.21.10</ecNumber>
    </recommendedName>
    <alternativeName>
        <fullName evidence="1">Holliday junction nuclease RuvC</fullName>
    </alternativeName>
    <alternativeName>
        <fullName evidence="1">Holliday junction resolvase RuvC</fullName>
    </alternativeName>
</protein>
<evidence type="ECO:0000255" key="1">
    <source>
        <dbReference type="HAMAP-Rule" id="MF_00034"/>
    </source>
</evidence>
<accession>Q3YT96</accession>
<comment type="function">
    <text evidence="1">The RuvA-RuvB-RuvC complex processes Holliday junction (HJ) DNA during genetic recombination and DNA repair. Endonuclease that resolves HJ intermediates. Cleaves cruciform DNA by making single-stranded nicks across the HJ at symmetrical positions within the homologous arms, yielding a 5'-phosphate and a 3'-hydroxyl group; requires a central core of homology in the junction. The consensus cleavage sequence is 5'-(A/T)TT(C/G)-3'. Cleavage occurs on the 3'-side of the TT dinucleotide at the point of strand exchange. HJ branch migration catalyzed by RuvA-RuvB allows RuvC to scan DNA until it finds its consensus sequence, where it cleaves and resolves the cruciform DNA.</text>
</comment>
<comment type="catalytic activity">
    <reaction evidence="1">
        <text>Endonucleolytic cleavage at a junction such as a reciprocal single-stranded crossover between two homologous DNA duplexes (Holliday junction).</text>
        <dbReference type="EC" id="3.1.21.10"/>
    </reaction>
</comment>
<comment type="cofactor">
    <cofactor evidence="1">
        <name>Mg(2+)</name>
        <dbReference type="ChEBI" id="CHEBI:18420"/>
    </cofactor>
    <text evidence="1">Binds 2 Mg(2+) ion per subunit.</text>
</comment>
<comment type="subunit">
    <text evidence="1">Homodimer which binds Holliday junction (HJ) DNA. The HJ becomes 2-fold symmetrical on binding to RuvC with unstacked arms; it has a different conformation from HJ DNA in complex with RuvA. In the full resolvosome a probable DNA-RuvA(4)-RuvB(12)-RuvC(2) complex forms which resolves the HJ.</text>
</comment>
<comment type="subcellular location">
    <subcellularLocation>
        <location evidence="1">Cytoplasm</location>
    </subcellularLocation>
</comment>
<comment type="similarity">
    <text evidence="1">Belongs to the RuvC family.</text>
</comment>
<organism>
    <name type="scientific">Ehrlichia canis (strain Jake)</name>
    <dbReference type="NCBI Taxonomy" id="269484"/>
    <lineage>
        <taxon>Bacteria</taxon>
        <taxon>Pseudomonadati</taxon>
        <taxon>Pseudomonadota</taxon>
        <taxon>Alphaproteobacteria</taxon>
        <taxon>Rickettsiales</taxon>
        <taxon>Anaplasmataceae</taxon>
        <taxon>Ehrlichia</taxon>
    </lineage>
</organism>
<reference key="1">
    <citation type="journal article" date="2006" name="J. Bacteriol.">
        <title>The genome of the obligately intracellular bacterium Ehrlichia canis reveals themes of complex membrane structure and immune evasion strategies.</title>
        <authorList>
            <person name="Mavromatis K."/>
            <person name="Doyle C.K."/>
            <person name="Lykidis A."/>
            <person name="Ivanova N."/>
            <person name="Francino M.P."/>
            <person name="Chain P."/>
            <person name="Shin M."/>
            <person name="Malfatti S."/>
            <person name="Larimer F."/>
            <person name="Copeland A."/>
            <person name="Detter J.C."/>
            <person name="Land M."/>
            <person name="Richardson P.M."/>
            <person name="Yu X.J."/>
            <person name="Walker D.H."/>
            <person name="McBride J.W."/>
            <person name="Kyrpides N.C."/>
        </authorList>
    </citation>
    <scope>NUCLEOTIDE SEQUENCE [LARGE SCALE GENOMIC DNA]</scope>
    <source>
        <strain>Jake</strain>
    </source>
</reference>
<sequence>MNVIGLDPGLNHTGWGILSIEKDIKLIGNGVIKTNNKETPGQRLNKIHKELINILNSYQINSASMEEVFINKNPRSSISLCYARGVLLLTLNAMNIQVFEYSSNYVKKSITGNGHAKKEQVHFMVEKILNVEFKGTYDISDAIAVALCHAYSKNNF</sequence>
<dbReference type="EC" id="3.1.21.10" evidence="1"/>
<dbReference type="EMBL" id="CP000107">
    <property type="protein sequence ID" value="AAZ68059.1"/>
    <property type="molecule type" value="Genomic_DNA"/>
</dbReference>
<dbReference type="RefSeq" id="WP_011304137.1">
    <property type="nucleotide sequence ID" value="NC_007354.1"/>
</dbReference>
<dbReference type="SMR" id="Q3YT96"/>
<dbReference type="FunCoup" id="Q3YT96">
    <property type="interactions" value="107"/>
</dbReference>
<dbReference type="STRING" id="269484.Ecaj_0008"/>
<dbReference type="KEGG" id="ecn:Ecaj_0008"/>
<dbReference type="eggNOG" id="COG0817">
    <property type="taxonomic scope" value="Bacteria"/>
</dbReference>
<dbReference type="HOGENOM" id="CLU_091257_1_0_5"/>
<dbReference type="InParanoid" id="Q3YT96"/>
<dbReference type="Proteomes" id="UP000000435">
    <property type="component" value="Chromosome"/>
</dbReference>
<dbReference type="GO" id="GO:0005737">
    <property type="term" value="C:cytoplasm"/>
    <property type="evidence" value="ECO:0007669"/>
    <property type="project" value="UniProtKB-SubCell"/>
</dbReference>
<dbReference type="GO" id="GO:0048476">
    <property type="term" value="C:Holliday junction resolvase complex"/>
    <property type="evidence" value="ECO:0007669"/>
    <property type="project" value="UniProtKB-UniRule"/>
</dbReference>
<dbReference type="GO" id="GO:0008821">
    <property type="term" value="F:crossover junction DNA endonuclease activity"/>
    <property type="evidence" value="ECO:0007669"/>
    <property type="project" value="UniProtKB-UniRule"/>
</dbReference>
<dbReference type="GO" id="GO:0003677">
    <property type="term" value="F:DNA binding"/>
    <property type="evidence" value="ECO:0007669"/>
    <property type="project" value="UniProtKB-KW"/>
</dbReference>
<dbReference type="GO" id="GO:0000287">
    <property type="term" value="F:magnesium ion binding"/>
    <property type="evidence" value="ECO:0007669"/>
    <property type="project" value="UniProtKB-UniRule"/>
</dbReference>
<dbReference type="GO" id="GO:0006310">
    <property type="term" value="P:DNA recombination"/>
    <property type="evidence" value="ECO:0007669"/>
    <property type="project" value="UniProtKB-UniRule"/>
</dbReference>
<dbReference type="GO" id="GO:0006281">
    <property type="term" value="P:DNA repair"/>
    <property type="evidence" value="ECO:0007669"/>
    <property type="project" value="UniProtKB-UniRule"/>
</dbReference>
<dbReference type="CDD" id="cd16962">
    <property type="entry name" value="RuvC"/>
    <property type="match status" value="1"/>
</dbReference>
<dbReference type="FunFam" id="3.30.420.10:FF:000002">
    <property type="entry name" value="Crossover junction endodeoxyribonuclease RuvC"/>
    <property type="match status" value="1"/>
</dbReference>
<dbReference type="Gene3D" id="3.30.420.10">
    <property type="entry name" value="Ribonuclease H-like superfamily/Ribonuclease H"/>
    <property type="match status" value="1"/>
</dbReference>
<dbReference type="HAMAP" id="MF_00034">
    <property type="entry name" value="RuvC"/>
    <property type="match status" value="1"/>
</dbReference>
<dbReference type="InterPro" id="IPR012337">
    <property type="entry name" value="RNaseH-like_sf"/>
</dbReference>
<dbReference type="InterPro" id="IPR036397">
    <property type="entry name" value="RNaseH_sf"/>
</dbReference>
<dbReference type="InterPro" id="IPR020563">
    <property type="entry name" value="X-over_junc_endoDNase_Mg_BS"/>
</dbReference>
<dbReference type="InterPro" id="IPR002176">
    <property type="entry name" value="X-over_junc_endoDNase_RuvC"/>
</dbReference>
<dbReference type="NCBIfam" id="TIGR00228">
    <property type="entry name" value="ruvC"/>
    <property type="match status" value="1"/>
</dbReference>
<dbReference type="PANTHER" id="PTHR30194">
    <property type="entry name" value="CROSSOVER JUNCTION ENDODEOXYRIBONUCLEASE RUVC"/>
    <property type="match status" value="1"/>
</dbReference>
<dbReference type="PANTHER" id="PTHR30194:SF3">
    <property type="entry name" value="CROSSOVER JUNCTION ENDODEOXYRIBONUCLEASE RUVC"/>
    <property type="match status" value="1"/>
</dbReference>
<dbReference type="Pfam" id="PF02075">
    <property type="entry name" value="RuvC"/>
    <property type="match status" value="1"/>
</dbReference>
<dbReference type="PRINTS" id="PR00696">
    <property type="entry name" value="RSOLVASERUVC"/>
</dbReference>
<dbReference type="SUPFAM" id="SSF53098">
    <property type="entry name" value="Ribonuclease H-like"/>
    <property type="match status" value="1"/>
</dbReference>
<dbReference type="PROSITE" id="PS01321">
    <property type="entry name" value="RUVC"/>
    <property type="match status" value="1"/>
</dbReference>
<proteinExistence type="inferred from homology"/>